<reference key="1">
    <citation type="journal article" date="2005" name="Nucleic Acids Res.">
        <title>The genome sequence of Salmonella enterica serovar Choleraesuis, a highly invasive and resistant zoonotic pathogen.</title>
        <authorList>
            <person name="Chiu C.-H."/>
            <person name="Tang P."/>
            <person name="Chu C."/>
            <person name="Hu S."/>
            <person name="Bao Q."/>
            <person name="Yu J."/>
            <person name="Chou Y.-Y."/>
            <person name="Wang H.-S."/>
            <person name="Lee Y.-S."/>
        </authorList>
    </citation>
    <scope>NUCLEOTIDE SEQUENCE [LARGE SCALE GENOMIC DNA]</scope>
    <source>
        <strain>SC-B67</strain>
    </source>
</reference>
<proteinExistence type="inferred from homology"/>
<gene>
    <name evidence="1" type="primary">clpS</name>
    <name type="ordered locus">SCH_0899</name>
</gene>
<evidence type="ECO:0000255" key="1">
    <source>
        <dbReference type="HAMAP-Rule" id="MF_00302"/>
    </source>
</evidence>
<sequence>MGKTNDWLDFDQLVEDSVRDALKPPSMYKVILVNDDYTPMEFVIDVLQKFFSYDVERATQLMLAVHYQGKAICGVFTAEVAETKVAMVNKYARENEHPLLCTLEKA</sequence>
<feature type="chain" id="PRO_0000215744" description="ATP-dependent Clp protease adapter protein ClpS">
    <location>
        <begin position="1"/>
        <end position="106"/>
    </location>
</feature>
<comment type="function">
    <text evidence="1">Involved in the modulation of the specificity of the ClpAP-mediated ATP-dependent protein degradation.</text>
</comment>
<comment type="subunit">
    <text evidence="1">Binds to the N-terminal domain of the chaperone ClpA.</text>
</comment>
<comment type="similarity">
    <text evidence="1">Belongs to the ClpS family.</text>
</comment>
<dbReference type="EMBL" id="AE017220">
    <property type="protein sequence ID" value="AAX64805.1"/>
    <property type="molecule type" value="Genomic_DNA"/>
</dbReference>
<dbReference type="RefSeq" id="WP_000520789.1">
    <property type="nucleotide sequence ID" value="NC_006905.1"/>
</dbReference>
<dbReference type="SMR" id="Q57R56"/>
<dbReference type="KEGG" id="sec:SCH_0899"/>
<dbReference type="HOGENOM" id="CLU_134358_2_1_6"/>
<dbReference type="Proteomes" id="UP000000538">
    <property type="component" value="Chromosome"/>
</dbReference>
<dbReference type="GO" id="GO:0030163">
    <property type="term" value="P:protein catabolic process"/>
    <property type="evidence" value="ECO:0007669"/>
    <property type="project" value="InterPro"/>
</dbReference>
<dbReference type="GO" id="GO:0006508">
    <property type="term" value="P:proteolysis"/>
    <property type="evidence" value="ECO:0007669"/>
    <property type="project" value="UniProtKB-UniRule"/>
</dbReference>
<dbReference type="FunFam" id="3.30.1390.10:FF:000002">
    <property type="entry name" value="ATP-dependent Clp protease adapter protein ClpS"/>
    <property type="match status" value="1"/>
</dbReference>
<dbReference type="Gene3D" id="3.30.1390.10">
    <property type="match status" value="1"/>
</dbReference>
<dbReference type="HAMAP" id="MF_00302">
    <property type="entry name" value="ClpS"/>
    <property type="match status" value="1"/>
</dbReference>
<dbReference type="InterPro" id="IPR022935">
    <property type="entry name" value="ClpS"/>
</dbReference>
<dbReference type="InterPro" id="IPR003769">
    <property type="entry name" value="ClpS_core"/>
</dbReference>
<dbReference type="InterPro" id="IPR014719">
    <property type="entry name" value="Ribosomal_bL12_C/ClpS-like"/>
</dbReference>
<dbReference type="NCBIfam" id="NF000670">
    <property type="entry name" value="PRK00033.1-3"/>
    <property type="match status" value="1"/>
</dbReference>
<dbReference type="NCBIfam" id="NF000672">
    <property type="entry name" value="PRK00033.1-5"/>
    <property type="match status" value="1"/>
</dbReference>
<dbReference type="PANTHER" id="PTHR33473:SF19">
    <property type="entry name" value="ATP-DEPENDENT CLP PROTEASE ADAPTER PROTEIN CLPS"/>
    <property type="match status" value="1"/>
</dbReference>
<dbReference type="PANTHER" id="PTHR33473">
    <property type="entry name" value="ATP-DEPENDENT CLP PROTEASE ADAPTER PROTEIN CLPS1, CHLOROPLASTIC"/>
    <property type="match status" value="1"/>
</dbReference>
<dbReference type="Pfam" id="PF02617">
    <property type="entry name" value="ClpS"/>
    <property type="match status" value="1"/>
</dbReference>
<dbReference type="SUPFAM" id="SSF54736">
    <property type="entry name" value="ClpS-like"/>
    <property type="match status" value="1"/>
</dbReference>
<accession>Q57R56</accession>
<name>CLPS_SALCH</name>
<protein>
    <recommendedName>
        <fullName evidence="1">ATP-dependent Clp protease adapter protein ClpS</fullName>
    </recommendedName>
</protein>
<organism>
    <name type="scientific">Salmonella choleraesuis (strain SC-B67)</name>
    <dbReference type="NCBI Taxonomy" id="321314"/>
    <lineage>
        <taxon>Bacteria</taxon>
        <taxon>Pseudomonadati</taxon>
        <taxon>Pseudomonadota</taxon>
        <taxon>Gammaproteobacteria</taxon>
        <taxon>Enterobacterales</taxon>
        <taxon>Enterobacteriaceae</taxon>
        <taxon>Salmonella</taxon>
    </lineage>
</organism>